<organism>
    <name type="scientific">Nitrosomonas eutropha (strain DSM 101675 / C91 / Nm57)</name>
    <dbReference type="NCBI Taxonomy" id="335283"/>
    <lineage>
        <taxon>Bacteria</taxon>
        <taxon>Pseudomonadati</taxon>
        <taxon>Pseudomonadota</taxon>
        <taxon>Betaproteobacteria</taxon>
        <taxon>Nitrosomonadales</taxon>
        <taxon>Nitrosomonadaceae</taxon>
        <taxon>Nitrosomonas</taxon>
    </lineage>
</organism>
<protein>
    <recommendedName>
        <fullName evidence="1">Ribosome-binding factor A</fullName>
    </recommendedName>
</protein>
<gene>
    <name evidence="1" type="primary">rbfA</name>
    <name type="ordered locus">Neut_1645</name>
</gene>
<dbReference type="EMBL" id="CP000450">
    <property type="protein sequence ID" value="ABI59888.1"/>
    <property type="molecule type" value="Genomic_DNA"/>
</dbReference>
<dbReference type="RefSeq" id="WP_011634694.1">
    <property type="nucleotide sequence ID" value="NC_008344.1"/>
</dbReference>
<dbReference type="SMR" id="Q0AFJ4"/>
<dbReference type="STRING" id="335283.Neut_1645"/>
<dbReference type="KEGG" id="net:Neut_1645"/>
<dbReference type="eggNOG" id="COG0858">
    <property type="taxonomic scope" value="Bacteria"/>
</dbReference>
<dbReference type="HOGENOM" id="CLU_089475_5_0_4"/>
<dbReference type="OrthoDB" id="307788at2"/>
<dbReference type="Proteomes" id="UP000001966">
    <property type="component" value="Chromosome"/>
</dbReference>
<dbReference type="GO" id="GO:0005829">
    <property type="term" value="C:cytosol"/>
    <property type="evidence" value="ECO:0007669"/>
    <property type="project" value="TreeGrafter"/>
</dbReference>
<dbReference type="GO" id="GO:0043024">
    <property type="term" value="F:ribosomal small subunit binding"/>
    <property type="evidence" value="ECO:0007669"/>
    <property type="project" value="TreeGrafter"/>
</dbReference>
<dbReference type="GO" id="GO:0030490">
    <property type="term" value="P:maturation of SSU-rRNA"/>
    <property type="evidence" value="ECO:0007669"/>
    <property type="project" value="UniProtKB-UniRule"/>
</dbReference>
<dbReference type="Gene3D" id="3.30.300.20">
    <property type="match status" value="1"/>
</dbReference>
<dbReference type="HAMAP" id="MF_00003">
    <property type="entry name" value="RbfA"/>
    <property type="match status" value="1"/>
</dbReference>
<dbReference type="InterPro" id="IPR015946">
    <property type="entry name" value="KH_dom-like_a/b"/>
</dbReference>
<dbReference type="InterPro" id="IPR000238">
    <property type="entry name" value="RbfA"/>
</dbReference>
<dbReference type="InterPro" id="IPR023799">
    <property type="entry name" value="RbfA_dom_sf"/>
</dbReference>
<dbReference type="InterPro" id="IPR020053">
    <property type="entry name" value="Ribosome-bd_factorA_CS"/>
</dbReference>
<dbReference type="NCBIfam" id="TIGR00082">
    <property type="entry name" value="rbfA"/>
    <property type="match status" value="1"/>
</dbReference>
<dbReference type="PANTHER" id="PTHR33515">
    <property type="entry name" value="RIBOSOME-BINDING FACTOR A, CHLOROPLASTIC-RELATED"/>
    <property type="match status" value="1"/>
</dbReference>
<dbReference type="PANTHER" id="PTHR33515:SF1">
    <property type="entry name" value="RIBOSOME-BINDING FACTOR A, CHLOROPLASTIC-RELATED"/>
    <property type="match status" value="1"/>
</dbReference>
<dbReference type="Pfam" id="PF02033">
    <property type="entry name" value="RBFA"/>
    <property type="match status" value="1"/>
</dbReference>
<dbReference type="SUPFAM" id="SSF89919">
    <property type="entry name" value="Ribosome-binding factor A, RbfA"/>
    <property type="match status" value="1"/>
</dbReference>
<dbReference type="PROSITE" id="PS01319">
    <property type="entry name" value="RBFA"/>
    <property type="match status" value="1"/>
</dbReference>
<keyword id="KW-0963">Cytoplasm</keyword>
<keyword id="KW-0690">Ribosome biogenesis</keyword>
<reference key="1">
    <citation type="journal article" date="2007" name="Environ. Microbiol.">
        <title>Whole-genome analysis of the ammonia-oxidizing bacterium, Nitrosomonas eutropha C91: implications for niche adaptation.</title>
        <authorList>
            <person name="Stein L.Y."/>
            <person name="Arp D.J."/>
            <person name="Berube P.M."/>
            <person name="Chain P.S."/>
            <person name="Hauser L."/>
            <person name="Jetten M.S."/>
            <person name="Klotz M.G."/>
            <person name="Larimer F.W."/>
            <person name="Norton J.M."/>
            <person name="Op den Camp H.J.M."/>
            <person name="Shin M."/>
            <person name="Wei X."/>
        </authorList>
    </citation>
    <scope>NUCLEOTIDE SEQUENCE [LARGE SCALE GENOMIC DNA]</scope>
    <source>
        <strain>DSM 101675 / C91 / Nm57</strain>
    </source>
</reference>
<proteinExistence type="inferred from homology"/>
<accession>Q0AFJ4</accession>
<comment type="function">
    <text evidence="1">One of several proteins that assist in the late maturation steps of the functional core of the 30S ribosomal subunit. Associates with free 30S ribosomal subunits (but not with 30S subunits that are part of 70S ribosomes or polysomes). Required for efficient processing of 16S rRNA. May interact with the 5'-terminal helix region of 16S rRNA.</text>
</comment>
<comment type="subunit">
    <text evidence="1">Monomer. Binds 30S ribosomal subunits, but not 50S ribosomal subunits or 70S ribosomes.</text>
</comment>
<comment type="subcellular location">
    <subcellularLocation>
        <location evidence="1">Cytoplasm</location>
    </subcellularLocation>
</comment>
<comment type="similarity">
    <text evidence="1">Belongs to the RbfA family.</text>
</comment>
<name>RBFA_NITEC</name>
<evidence type="ECO:0000255" key="1">
    <source>
        <dbReference type="HAMAP-Rule" id="MF_00003"/>
    </source>
</evidence>
<feature type="chain" id="PRO_1000000153" description="Ribosome-binding factor A">
    <location>
        <begin position="1"/>
        <end position="117"/>
    </location>
</feature>
<sequence length="117" mass="13217">MPKDFSRTLRVADQVQRELASLIQNEIMDPRIGMITLTGVEVTRDYTYAKVFYTTLGGNENAQLAEEGLKRAAGFLRSQLAGKIRLRIIPKLQFVYDESIERGIKLSRLIDEAVGKT</sequence>